<gene>
    <name type="primary">bloc1s1</name>
</gene>
<dbReference type="EC" id="2.3.1.-" evidence="1"/>
<dbReference type="EMBL" id="AAMC01034982">
    <property type="status" value="NOT_ANNOTATED_CDS"/>
    <property type="molecule type" value="Genomic_DNA"/>
</dbReference>
<dbReference type="EMBL" id="AAMC01034983">
    <property type="status" value="NOT_ANNOTATED_CDS"/>
    <property type="molecule type" value="Genomic_DNA"/>
</dbReference>
<dbReference type="EMBL" id="AAMC01034984">
    <property type="status" value="NOT_ANNOTATED_CDS"/>
    <property type="molecule type" value="Genomic_DNA"/>
</dbReference>
<dbReference type="EMBL" id="BC118866">
    <property type="protein sequence ID" value="AAI18867.1"/>
    <property type="molecule type" value="mRNA"/>
</dbReference>
<dbReference type="RefSeq" id="NP_001072249.1">
    <property type="nucleotide sequence ID" value="NM_001078781.1"/>
</dbReference>
<dbReference type="SMR" id="Q0VFD8"/>
<dbReference type="FunCoup" id="Q0VFD8">
    <property type="interactions" value="470"/>
</dbReference>
<dbReference type="STRING" id="8364.ENSXETP00000016095"/>
<dbReference type="PaxDb" id="8364-ENSXETP00000037986"/>
<dbReference type="DNASU" id="779698"/>
<dbReference type="GeneID" id="779698"/>
<dbReference type="KEGG" id="xtr:779698"/>
<dbReference type="AGR" id="Xenbase:XB-GENE-952074"/>
<dbReference type="CTD" id="2647"/>
<dbReference type="Xenbase" id="XB-GENE-952074">
    <property type="gene designation" value="bloc1s1"/>
</dbReference>
<dbReference type="eggNOG" id="KOG3390">
    <property type="taxonomic scope" value="Eukaryota"/>
</dbReference>
<dbReference type="HOGENOM" id="CLU_115602_3_0_1"/>
<dbReference type="InParanoid" id="Q0VFD8"/>
<dbReference type="OMA" id="WMKIMEY"/>
<dbReference type="OrthoDB" id="20018at2759"/>
<dbReference type="PhylomeDB" id="Q0VFD8"/>
<dbReference type="TreeFam" id="TF314443"/>
<dbReference type="Reactome" id="R-XTR-432720">
    <property type="pathway name" value="Lysosome Vesicle Biogenesis"/>
</dbReference>
<dbReference type="Proteomes" id="UP000008143">
    <property type="component" value="Chromosome 2"/>
</dbReference>
<dbReference type="Bgee" id="ENSXETG00000017483">
    <property type="expression patterns" value="Expressed in heart and 13 other cell types or tissues"/>
</dbReference>
<dbReference type="GO" id="GO:1904115">
    <property type="term" value="C:axon cytoplasm"/>
    <property type="evidence" value="ECO:0007669"/>
    <property type="project" value="GOC"/>
</dbReference>
<dbReference type="GO" id="GO:0031083">
    <property type="term" value="C:BLOC-1 complex"/>
    <property type="evidence" value="ECO:0007669"/>
    <property type="project" value="InterPro"/>
</dbReference>
<dbReference type="GO" id="GO:0099078">
    <property type="term" value="C:BORC complex"/>
    <property type="evidence" value="ECO:0000250"/>
    <property type="project" value="UniProtKB"/>
</dbReference>
<dbReference type="GO" id="GO:0005829">
    <property type="term" value="C:cytosol"/>
    <property type="evidence" value="ECO:0000250"/>
    <property type="project" value="UniProtKB"/>
</dbReference>
<dbReference type="GO" id="GO:0005765">
    <property type="term" value="C:lysosomal membrane"/>
    <property type="evidence" value="ECO:0007669"/>
    <property type="project" value="UniProtKB-SubCell"/>
</dbReference>
<dbReference type="GO" id="GO:0005758">
    <property type="term" value="C:mitochondrial intermembrane space"/>
    <property type="evidence" value="ECO:0000250"/>
    <property type="project" value="UniProtKB"/>
</dbReference>
<dbReference type="GO" id="GO:0005759">
    <property type="term" value="C:mitochondrial matrix"/>
    <property type="evidence" value="ECO:0000250"/>
    <property type="project" value="UniProtKB"/>
</dbReference>
<dbReference type="GO" id="GO:0061733">
    <property type="term" value="F:protein-lysine-acetyltransferase activity"/>
    <property type="evidence" value="ECO:0000250"/>
    <property type="project" value="UniProtKB"/>
</dbReference>
<dbReference type="GO" id="GO:0009060">
    <property type="term" value="P:aerobic respiration"/>
    <property type="evidence" value="ECO:0000250"/>
    <property type="project" value="UniProtKB"/>
</dbReference>
<dbReference type="GO" id="GO:0008089">
    <property type="term" value="P:anterograde axonal transport"/>
    <property type="evidence" value="ECO:0000250"/>
    <property type="project" value="UniProtKB"/>
</dbReference>
<dbReference type="GO" id="GO:0048490">
    <property type="term" value="P:anterograde synaptic vesicle transport"/>
    <property type="evidence" value="ECO:0000250"/>
    <property type="project" value="UniProtKB"/>
</dbReference>
<dbReference type="GO" id="GO:0032418">
    <property type="term" value="P:lysosome localization"/>
    <property type="evidence" value="ECO:0000250"/>
    <property type="project" value="UniProtKB"/>
</dbReference>
<dbReference type="GO" id="GO:0031175">
    <property type="term" value="P:neuron projection development"/>
    <property type="evidence" value="ECO:0000250"/>
    <property type="project" value="UniProtKB"/>
</dbReference>
<dbReference type="GO" id="GO:0018394">
    <property type="term" value="P:peptidyl-lysine acetylation"/>
    <property type="evidence" value="ECO:0000250"/>
    <property type="project" value="UniProtKB"/>
</dbReference>
<dbReference type="InterPro" id="IPR009395">
    <property type="entry name" value="BLOC1S1"/>
</dbReference>
<dbReference type="PANTHER" id="PTHR13073:SF0">
    <property type="entry name" value="BIOGENESIS OF LYSOSOME-RELATED ORGANELLES COMPLEX 1 SUBUNIT 1"/>
    <property type="match status" value="1"/>
</dbReference>
<dbReference type="PANTHER" id="PTHR13073">
    <property type="entry name" value="BLOC-1 COMPLEX SUBUNIT 1"/>
    <property type="match status" value="1"/>
</dbReference>
<dbReference type="Pfam" id="PF06320">
    <property type="entry name" value="GCN5L1"/>
    <property type="match status" value="1"/>
</dbReference>
<name>BL1S1_XENTR</name>
<accession>Q0VFD8</accession>
<feature type="chain" id="PRO_0000416772" description="Biogenesis of lysosome-related organelles complex 1 subunit 1">
    <location>
        <begin position="1"/>
        <end position="125"/>
    </location>
</feature>
<feature type="region of interest" description="Disordered" evidence="3">
    <location>
        <begin position="1"/>
        <end position="24"/>
    </location>
</feature>
<feature type="coiled-coil region" evidence="2">
    <location>
        <begin position="1"/>
        <end position="25"/>
    </location>
</feature>
<proteinExistence type="evidence at transcript level"/>
<organism>
    <name type="scientific">Xenopus tropicalis</name>
    <name type="common">Western clawed frog</name>
    <name type="synonym">Silurana tropicalis</name>
    <dbReference type="NCBI Taxonomy" id="8364"/>
    <lineage>
        <taxon>Eukaryota</taxon>
        <taxon>Metazoa</taxon>
        <taxon>Chordata</taxon>
        <taxon>Craniata</taxon>
        <taxon>Vertebrata</taxon>
        <taxon>Euteleostomi</taxon>
        <taxon>Amphibia</taxon>
        <taxon>Batrachia</taxon>
        <taxon>Anura</taxon>
        <taxon>Pipoidea</taxon>
        <taxon>Pipidae</taxon>
        <taxon>Xenopodinae</taxon>
        <taxon>Xenopus</taxon>
        <taxon>Silurana</taxon>
    </lineage>
</organism>
<keyword id="KW-0175">Coiled coil</keyword>
<keyword id="KW-0963">Cytoplasm</keyword>
<keyword id="KW-0458">Lysosome</keyword>
<keyword id="KW-0472">Membrane</keyword>
<keyword id="KW-0496">Mitochondrion</keyword>
<keyword id="KW-1185">Reference proteome</keyword>
<keyword id="KW-0808">Transferase</keyword>
<comment type="function">
    <text evidence="1">Component of the BLOC-1 complex, a complex that is required for normal biogenesis of lysosome-related organelles (LRO), such as platelet dense granules and melanosomes. May also play a role in intracellular vesicle trafficking. As part of a BORC-like complex may play a role in lysosomes movement and localization at the cell periphery. Associated with the cytosolic face of lysosomes, this complex may couple lysosomes to microtubule plus-end-directed kinesin motor.</text>
</comment>
<comment type="function">
    <text evidence="1">Acts as a protein acetyltransferase. May negatively regulate aerobic respiration through mitochondrial protein lysine-acetylation.</text>
</comment>
<comment type="catalytic activity">
    <reaction evidence="1">
        <text>L-lysyl-[protein] + acetyl-CoA = N(6)-acetyl-L-lysyl-[protein] + CoA + H(+)</text>
        <dbReference type="Rhea" id="RHEA:45948"/>
        <dbReference type="Rhea" id="RHEA-COMP:9752"/>
        <dbReference type="Rhea" id="RHEA-COMP:10731"/>
        <dbReference type="ChEBI" id="CHEBI:15378"/>
        <dbReference type="ChEBI" id="CHEBI:29969"/>
        <dbReference type="ChEBI" id="CHEBI:57287"/>
        <dbReference type="ChEBI" id="CHEBI:57288"/>
        <dbReference type="ChEBI" id="CHEBI:61930"/>
    </reaction>
    <physiologicalReaction direction="left-to-right" evidence="1">
        <dbReference type="Rhea" id="RHEA:45949"/>
    </physiologicalReaction>
</comment>
<comment type="subunit">
    <text evidence="1">Component of the biogenesis of lysosome-related organelles complex 1 (BLOC-1).</text>
</comment>
<comment type="subcellular location">
    <subcellularLocation>
        <location evidence="1">Mitochondrion intermembrane space</location>
    </subcellularLocation>
    <subcellularLocation>
        <location evidence="1">Mitochondrion matrix</location>
    </subcellularLocation>
    <subcellularLocation>
        <location evidence="1">Cytoplasm</location>
        <location evidence="1">Cytosol</location>
    </subcellularLocation>
    <subcellularLocation>
        <location evidence="1">Lysosome membrane</location>
    </subcellularLocation>
</comment>
<comment type="similarity">
    <text evidence="4">Belongs to the BLOC1S1 family.</text>
</comment>
<reference key="1">
    <citation type="journal article" date="2010" name="Science">
        <title>The genome of the Western clawed frog Xenopus tropicalis.</title>
        <authorList>
            <person name="Hellsten U."/>
            <person name="Harland R.M."/>
            <person name="Gilchrist M.J."/>
            <person name="Hendrix D."/>
            <person name="Jurka J."/>
            <person name="Kapitonov V."/>
            <person name="Ovcharenko I."/>
            <person name="Putnam N.H."/>
            <person name="Shu S."/>
            <person name="Taher L."/>
            <person name="Blitz I.L."/>
            <person name="Blumberg B."/>
            <person name="Dichmann D.S."/>
            <person name="Dubchak I."/>
            <person name="Amaya E."/>
            <person name="Detter J.C."/>
            <person name="Fletcher R."/>
            <person name="Gerhard D.S."/>
            <person name="Goodstein D."/>
            <person name="Graves T."/>
            <person name="Grigoriev I.V."/>
            <person name="Grimwood J."/>
            <person name="Kawashima T."/>
            <person name="Lindquist E."/>
            <person name="Lucas S.M."/>
            <person name="Mead P.E."/>
            <person name="Mitros T."/>
            <person name="Ogino H."/>
            <person name="Ohta Y."/>
            <person name="Poliakov A.V."/>
            <person name="Pollet N."/>
            <person name="Robert J."/>
            <person name="Salamov A."/>
            <person name="Sater A.K."/>
            <person name="Schmutz J."/>
            <person name="Terry A."/>
            <person name="Vize P.D."/>
            <person name="Warren W.C."/>
            <person name="Wells D."/>
            <person name="Wills A."/>
            <person name="Wilson R.K."/>
            <person name="Zimmerman L.B."/>
            <person name="Zorn A.M."/>
            <person name="Grainger R."/>
            <person name="Grammer T."/>
            <person name="Khokha M.K."/>
            <person name="Richardson P.M."/>
            <person name="Rokhsar D.S."/>
        </authorList>
    </citation>
    <scope>NUCLEOTIDE SEQUENCE [LARGE SCALE GENOMIC DNA]</scope>
</reference>
<reference key="2">
    <citation type="submission" date="2006-07" db="EMBL/GenBank/DDBJ databases">
        <authorList>
            <consortium name="NIH - Xenopus Gene Collection (XGC) project"/>
        </authorList>
    </citation>
    <scope>NUCLEOTIDE SEQUENCE [LARGE SCALE MRNA]</scope>
    <source>
        <strain>N6</strain>
        <tissue>Skeletal muscle</tissue>
    </source>
</reference>
<sequence>MLSRLLKEHQGKQTERKEAQEKRRKDAIAAATTLTEALVDHLNVGVAQAYVNQRKLDHEVKTLQTQAAQFAKQTTQWISLVENFNQALKEIGDVENWARSIEKDMRIIATALEYVYKGQLQPSAS</sequence>
<protein>
    <recommendedName>
        <fullName>Biogenesis of lysosome-related organelles complex 1 subunit 1</fullName>
        <shortName>BLOC-1 subunit 1</shortName>
    </recommendedName>
    <alternativeName>
        <fullName evidence="4">Protein acetyltransferase BLOC1S1</fullName>
        <ecNumber evidence="1">2.3.1.-</ecNumber>
    </alternativeName>
</protein>
<evidence type="ECO:0000250" key="1">
    <source>
        <dbReference type="UniProtKB" id="P78537"/>
    </source>
</evidence>
<evidence type="ECO:0000255" key="2"/>
<evidence type="ECO:0000256" key="3">
    <source>
        <dbReference type="SAM" id="MobiDB-lite"/>
    </source>
</evidence>
<evidence type="ECO:0000305" key="4"/>